<dbReference type="EMBL" id="AB175665">
    <property type="protein sequence ID" value="BAD24666.1"/>
    <property type="molecule type" value="mRNA"/>
</dbReference>
<dbReference type="SMR" id="Q6I6M7"/>
<dbReference type="GO" id="GO:0005938">
    <property type="term" value="C:cell cortex"/>
    <property type="evidence" value="ECO:0007669"/>
    <property type="project" value="UniProtKB-SubCell"/>
</dbReference>
<dbReference type="GO" id="GO:0005829">
    <property type="term" value="C:cytosol"/>
    <property type="evidence" value="ECO:0000250"/>
    <property type="project" value="UniProtKB"/>
</dbReference>
<dbReference type="GO" id="GO:0005576">
    <property type="term" value="C:extracellular region"/>
    <property type="evidence" value="ECO:0000250"/>
    <property type="project" value="UniProtKB"/>
</dbReference>
<dbReference type="GO" id="GO:0005615">
    <property type="term" value="C:extracellular space"/>
    <property type="evidence" value="ECO:0000250"/>
    <property type="project" value="UniProtKB"/>
</dbReference>
<dbReference type="GO" id="GO:0005634">
    <property type="term" value="C:nucleus"/>
    <property type="evidence" value="ECO:0007669"/>
    <property type="project" value="UniProtKB-SubCell"/>
</dbReference>
<dbReference type="GO" id="GO:0005104">
    <property type="term" value="F:fibroblast growth factor receptor binding"/>
    <property type="evidence" value="ECO:0000250"/>
    <property type="project" value="UniProtKB"/>
</dbReference>
<dbReference type="GO" id="GO:0008083">
    <property type="term" value="F:growth factor activity"/>
    <property type="evidence" value="ECO:0000250"/>
    <property type="project" value="UniProtKB"/>
</dbReference>
<dbReference type="GO" id="GO:0008201">
    <property type="term" value="F:heparin binding"/>
    <property type="evidence" value="ECO:0000250"/>
    <property type="project" value="UniProtKB"/>
</dbReference>
<dbReference type="GO" id="GO:0005178">
    <property type="term" value="F:integrin binding"/>
    <property type="evidence" value="ECO:0000250"/>
    <property type="project" value="UniProtKB"/>
</dbReference>
<dbReference type="GO" id="GO:0044548">
    <property type="term" value="F:S100 protein binding"/>
    <property type="evidence" value="ECO:0000250"/>
    <property type="project" value="UniProtKB"/>
</dbReference>
<dbReference type="GO" id="GO:0001525">
    <property type="term" value="P:angiogenesis"/>
    <property type="evidence" value="ECO:0007669"/>
    <property type="project" value="UniProtKB-KW"/>
</dbReference>
<dbReference type="GO" id="GO:0060681">
    <property type="term" value="P:branch elongation involved in ureteric bud branching"/>
    <property type="evidence" value="ECO:0000250"/>
    <property type="project" value="UniProtKB"/>
</dbReference>
<dbReference type="GO" id="GO:0030154">
    <property type="term" value="P:cell differentiation"/>
    <property type="evidence" value="ECO:0007669"/>
    <property type="project" value="UniProtKB-KW"/>
</dbReference>
<dbReference type="GO" id="GO:0008543">
    <property type="term" value="P:fibroblast growth factor receptor signaling pathway"/>
    <property type="evidence" value="ECO:0000250"/>
    <property type="project" value="UniProtKB"/>
</dbReference>
<dbReference type="GO" id="GO:0072163">
    <property type="term" value="P:mesonephric epithelium development"/>
    <property type="evidence" value="ECO:0000250"/>
    <property type="project" value="UniProtKB"/>
</dbReference>
<dbReference type="GO" id="GO:0045766">
    <property type="term" value="P:positive regulation of angiogenesis"/>
    <property type="evidence" value="ECO:0000250"/>
    <property type="project" value="UniProtKB"/>
</dbReference>
<dbReference type="GO" id="GO:0051781">
    <property type="term" value="P:positive regulation of cell division"/>
    <property type="evidence" value="ECO:0000250"/>
    <property type="project" value="UniProtKB"/>
</dbReference>
<dbReference type="GO" id="GO:0030335">
    <property type="term" value="P:positive regulation of cell migration"/>
    <property type="evidence" value="ECO:0000250"/>
    <property type="project" value="UniProtKB"/>
</dbReference>
<dbReference type="GO" id="GO:0008284">
    <property type="term" value="P:positive regulation of cell population proliferation"/>
    <property type="evidence" value="ECO:0000250"/>
    <property type="project" value="UniProtKB"/>
</dbReference>
<dbReference type="GO" id="GO:0045542">
    <property type="term" value="P:positive regulation of cholesterol biosynthetic process"/>
    <property type="evidence" value="ECO:0000250"/>
    <property type="project" value="UniProtKB"/>
</dbReference>
<dbReference type="GO" id="GO:1902533">
    <property type="term" value="P:positive regulation of intracellular signal transduction"/>
    <property type="evidence" value="ECO:0000250"/>
    <property type="project" value="UniProtKB"/>
</dbReference>
<dbReference type="GO" id="GO:0045944">
    <property type="term" value="P:positive regulation of transcription by RNA polymerase II"/>
    <property type="evidence" value="ECO:0000250"/>
    <property type="project" value="UniProtKB"/>
</dbReference>
<dbReference type="CDD" id="cd23313">
    <property type="entry name" value="beta-trefoil_FGF1"/>
    <property type="match status" value="1"/>
</dbReference>
<dbReference type="FunFam" id="2.80.10.50:FF:000020">
    <property type="entry name" value="Fibroblast growth factor 1"/>
    <property type="match status" value="1"/>
</dbReference>
<dbReference type="Gene3D" id="2.80.10.50">
    <property type="match status" value="1"/>
</dbReference>
<dbReference type="InterPro" id="IPR002209">
    <property type="entry name" value="Fibroblast_GF_fam"/>
</dbReference>
<dbReference type="InterPro" id="IPR008996">
    <property type="entry name" value="IL1/FGF"/>
</dbReference>
<dbReference type="PANTHER" id="PTHR11486">
    <property type="entry name" value="FIBROBLAST GROWTH FACTOR"/>
    <property type="match status" value="1"/>
</dbReference>
<dbReference type="Pfam" id="PF00167">
    <property type="entry name" value="FGF"/>
    <property type="match status" value="1"/>
</dbReference>
<dbReference type="PRINTS" id="PR00263">
    <property type="entry name" value="HBGFFGF"/>
</dbReference>
<dbReference type="PRINTS" id="PR00262">
    <property type="entry name" value="IL1HBGF"/>
</dbReference>
<dbReference type="SMART" id="SM00442">
    <property type="entry name" value="FGF"/>
    <property type="match status" value="1"/>
</dbReference>
<dbReference type="SUPFAM" id="SSF50353">
    <property type="entry name" value="Cytokine"/>
    <property type="match status" value="1"/>
</dbReference>
<dbReference type="PROSITE" id="PS00247">
    <property type="entry name" value="HBGF_FGF"/>
    <property type="match status" value="1"/>
</dbReference>
<feature type="propeptide" id="PRO_0000008923" evidence="1">
    <location>
        <begin position="1" status="less than"/>
        <end position="11"/>
    </location>
</feature>
<feature type="chain" id="PRO_0000008924" description="Fibroblast growth factor 1">
    <location>
        <begin position="12"/>
        <end position="148" status="greater than"/>
    </location>
</feature>
<feature type="region of interest" description="Heparin-binding" evidence="1">
    <location>
        <begin position="123"/>
        <end position="139"/>
    </location>
</feature>
<feature type="binding site" evidence="1">
    <location>
        <position position="29"/>
    </location>
    <ligand>
        <name>heparin</name>
        <dbReference type="ChEBI" id="CHEBI:28304"/>
    </ligand>
</feature>
<feature type="non-terminal residue">
    <location>
        <position position="1"/>
    </location>
</feature>
<feature type="non-terminal residue">
    <location>
        <position position="148"/>
    </location>
</feature>
<gene>
    <name type="primary">fgf1</name>
    <name type="synonym">fgf-1</name>
</gene>
<keyword id="KW-0037">Angiogenesis</keyword>
<keyword id="KW-0963">Cytoplasm</keyword>
<keyword id="KW-0217">Developmental protein</keyword>
<keyword id="KW-0221">Differentiation</keyword>
<keyword id="KW-0339">Growth factor</keyword>
<keyword id="KW-0358">Heparin-binding</keyword>
<keyword id="KW-0497">Mitogen</keyword>
<keyword id="KW-0539">Nucleus</keyword>
<keyword id="KW-0964">Secreted</keyword>
<sequence length="148" mass="16946">EITTFAALTERFNLPNGNYQRPKLLYCSNGGHFLRILPDGKVDGTRDRSDPYIQLQFYAESVGEVYIKSLETGQYLAMDSDGRLYASQSPSEECLFLERLEENHYNTYKSKMHADKDWFVGIKKNGKTKLGSRTHFGQKAILFLPLPV</sequence>
<name>FGF1_CYNPY</name>
<organism>
    <name type="scientific">Cynops pyrrhogaster</name>
    <name type="common">Japanese fire-bellied newt</name>
    <name type="synonym">Molge pyrrhogaster</name>
    <dbReference type="NCBI Taxonomy" id="8330"/>
    <lineage>
        <taxon>Eukaryota</taxon>
        <taxon>Metazoa</taxon>
        <taxon>Chordata</taxon>
        <taxon>Craniata</taxon>
        <taxon>Vertebrata</taxon>
        <taxon>Euteleostomi</taxon>
        <taxon>Amphibia</taxon>
        <taxon>Batrachia</taxon>
        <taxon>Caudata</taxon>
        <taxon>Salamandroidea</taxon>
        <taxon>Salamandridae</taxon>
        <taxon>Pleurodelinae</taxon>
        <taxon>Cynops</taxon>
    </lineage>
</organism>
<accession>Q6I6M7</accession>
<evidence type="ECO:0000250" key="1"/>
<evidence type="ECO:0000250" key="2">
    <source>
        <dbReference type="UniProtKB" id="P05230"/>
    </source>
</evidence>
<evidence type="ECO:0000305" key="3"/>
<protein>
    <recommendedName>
        <fullName>Fibroblast growth factor 1</fullName>
        <shortName>FGF-1</shortName>
    </recommendedName>
    <alternativeName>
        <fullName>Acidic fibroblast growth factor</fullName>
        <shortName>aFGF</shortName>
    </alternativeName>
    <alternativeName>
        <fullName>Heparin-binding growth factor 1</fullName>
        <shortName>HBGF-1</shortName>
    </alternativeName>
</protein>
<comment type="function">
    <text evidence="2">Plays an important role in the regulation of cell survival, cell division, angiogenesis, cell differentiation and cell migration. Functions as a potent mitogen in vitro. Acts as a ligand for FGFR1 and integrins. Binds to FGFR1 in the presence of heparin leading to FGFR1 dimerization and activation via sequential autophosphorylation on tyrosine residues which act as docking sites for interacting proteins, leading to the activation of several signaling cascades. Binds to integrins. Its binding to integrins and subsequent ternary complex formation with integrins and FGFR1 are essential for FGF1 signaling.</text>
</comment>
<comment type="subcellular location">
    <subcellularLocation>
        <location evidence="1">Secreted</location>
    </subcellularLocation>
    <subcellularLocation>
        <location evidence="1">Cytoplasm</location>
    </subcellularLocation>
    <subcellularLocation>
        <location evidence="1">Cytoplasm</location>
        <location evidence="1">Cell cortex</location>
    </subcellularLocation>
    <subcellularLocation>
        <location evidence="1">Cytoplasm</location>
        <location evidence="1">Cytosol</location>
    </subcellularLocation>
    <subcellularLocation>
        <location evidence="1">Nucleus</location>
    </subcellularLocation>
    <text evidence="1">Lacks a cleavable signal sequence. Within the cytoplasm, it is transported to the cell membrane and then secreted by a non-classical pathway that requires Cu(2+) ions and S100A13 (By similarity). Binding of exogenous FGF1 to FGFR facilitates endocytosis followed by translocation of FGF1 across endosomal membrane into the cytosol. Nuclear import from the cytosol requires the classical nuclear import machinery (By similarity).</text>
</comment>
<comment type="similarity">
    <text evidence="3">Belongs to the heparin-binding growth factors family.</text>
</comment>
<proteinExistence type="evidence at transcript level"/>
<reference key="1">
    <citation type="journal article" date="2004" name="Mech. Dev.">
        <title>FGF2 triggers iris-derived lens regeneration in newt eye.</title>
        <authorList>
            <person name="Hayashi T."/>
            <person name="Mizuno N."/>
            <person name="Ueda Y."/>
            <person name="Okamoto M."/>
            <person name="Kondoh H."/>
        </authorList>
    </citation>
    <scope>NUCLEOTIDE SEQUENCE [MRNA]</scope>
</reference>